<sequence>MSEEKSYCGFIAIVGRPNVGKSTLLNTLLGQKISITSRKAQTTRHRIVGIHTEGEYQAIYVDTPGLHMEEKRAINRLMNKAASSSIGDVELIIFVVEGTRWTADDEMVLNKLRDGRAPVILAVNKVDNVQEKADLLPHLQFLASQMNFLDIVPLSAESGMNVDTIAGIVRKHLPEAIHHFPEDYITDRSQRFMASEIIREKLMRFLGAELPYSVTVEIERFQTNERGGYDINGLILVEREGQKKMVIGNKGSKIKTIGIEARKDMQDMFEAPVHLELWVKVKSGWADDERALRSLGYGDDV</sequence>
<gene>
    <name evidence="1" type="primary">era</name>
    <name type="ordered locus">Ent638_3053</name>
</gene>
<feature type="chain" id="PRO_1000079696" description="GTPase Era">
    <location>
        <begin position="1"/>
        <end position="301"/>
    </location>
</feature>
<feature type="domain" description="Era-type G" evidence="2">
    <location>
        <begin position="7"/>
        <end position="175"/>
    </location>
</feature>
<feature type="domain" description="KH type-2" evidence="1">
    <location>
        <begin position="198"/>
        <end position="283"/>
    </location>
</feature>
<feature type="region of interest" description="G1" evidence="2">
    <location>
        <begin position="15"/>
        <end position="22"/>
    </location>
</feature>
<feature type="region of interest" description="G2" evidence="2">
    <location>
        <begin position="41"/>
        <end position="45"/>
    </location>
</feature>
<feature type="region of interest" description="G3" evidence="2">
    <location>
        <begin position="62"/>
        <end position="65"/>
    </location>
</feature>
<feature type="region of interest" description="G4" evidence="2">
    <location>
        <begin position="124"/>
        <end position="127"/>
    </location>
</feature>
<feature type="region of interest" description="G5" evidence="2">
    <location>
        <begin position="154"/>
        <end position="156"/>
    </location>
</feature>
<feature type="binding site" evidence="1">
    <location>
        <begin position="15"/>
        <end position="22"/>
    </location>
    <ligand>
        <name>GTP</name>
        <dbReference type="ChEBI" id="CHEBI:37565"/>
    </ligand>
</feature>
<feature type="binding site" evidence="1">
    <location>
        <begin position="62"/>
        <end position="66"/>
    </location>
    <ligand>
        <name>GTP</name>
        <dbReference type="ChEBI" id="CHEBI:37565"/>
    </ligand>
</feature>
<feature type="binding site" evidence="1">
    <location>
        <begin position="124"/>
        <end position="127"/>
    </location>
    <ligand>
        <name>GTP</name>
        <dbReference type="ChEBI" id="CHEBI:37565"/>
    </ligand>
</feature>
<name>ERA_ENT38</name>
<dbReference type="EMBL" id="CP000653">
    <property type="protein sequence ID" value="ABP61717.1"/>
    <property type="molecule type" value="Genomic_DNA"/>
</dbReference>
<dbReference type="RefSeq" id="WP_015960047.1">
    <property type="nucleotide sequence ID" value="NC_009436.1"/>
</dbReference>
<dbReference type="SMR" id="A4WDD7"/>
<dbReference type="STRING" id="399742.Ent638_3053"/>
<dbReference type="GeneID" id="93305994"/>
<dbReference type="KEGG" id="ent:Ent638_3053"/>
<dbReference type="eggNOG" id="COG1159">
    <property type="taxonomic scope" value="Bacteria"/>
</dbReference>
<dbReference type="HOGENOM" id="CLU_038009_1_2_6"/>
<dbReference type="OrthoDB" id="9805918at2"/>
<dbReference type="Proteomes" id="UP000000230">
    <property type="component" value="Chromosome"/>
</dbReference>
<dbReference type="GO" id="GO:0005829">
    <property type="term" value="C:cytosol"/>
    <property type="evidence" value="ECO:0007669"/>
    <property type="project" value="TreeGrafter"/>
</dbReference>
<dbReference type="GO" id="GO:0005886">
    <property type="term" value="C:plasma membrane"/>
    <property type="evidence" value="ECO:0007669"/>
    <property type="project" value="UniProtKB-SubCell"/>
</dbReference>
<dbReference type="GO" id="GO:0005525">
    <property type="term" value="F:GTP binding"/>
    <property type="evidence" value="ECO:0007669"/>
    <property type="project" value="UniProtKB-UniRule"/>
</dbReference>
<dbReference type="GO" id="GO:0003924">
    <property type="term" value="F:GTPase activity"/>
    <property type="evidence" value="ECO:0007669"/>
    <property type="project" value="UniProtKB-UniRule"/>
</dbReference>
<dbReference type="GO" id="GO:0043024">
    <property type="term" value="F:ribosomal small subunit binding"/>
    <property type="evidence" value="ECO:0007669"/>
    <property type="project" value="TreeGrafter"/>
</dbReference>
<dbReference type="GO" id="GO:0070181">
    <property type="term" value="F:small ribosomal subunit rRNA binding"/>
    <property type="evidence" value="ECO:0007669"/>
    <property type="project" value="UniProtKB-UniRule"/>
</dbReference>
<dbReference type="GO" id="GO:0000028">
    <property type="term" value="P:ribosomal small subunit assembly"/>
    <property type="evidence" value="ECO:0007669"/>
    <property type="project" value="TreeGrafter"/>
</dbReference>
<dbReference type="CDD" id="cd04163">
    <property type="entry name" value="Era"/>
    <property type="match status" value="1"/>
</dbReference>
<dbReference type="CDD" id="cd22534">
    <property type="entry name" value="KH-II_Era"/>
    <property type="match status" value="1"/>
</dbReference>
<dbReference type="FunFam" id="3.30.300.20:FF:000003">
    <property type="entry name" value="GTPase Era"/>
    <property type="match status" value="1"/>
</dbReference>
<dbReference type="FunFam" id="3.40.50.300:FF:000094">
    <property type="entry name" value="GTPase Era"/>
    <property type="match status" value="1"/>
</dbReference>
<dbReference type="Gene3D" id="3.30.300.20">
    <property type="match status" value="1"/>
</dbReference>
<dbReference type="Gene3D" id="3.40.50.300">
    <property type="entry name" value="P-loop containing nucleotide triphosphate hydrolases"/>
    <property type="match status" value="1"/>
</dbReference>
<dbReference type="HAMAP" id="MF_00367">
    <property type="entry name" value="GTPase_Era"/>
    <property type="match status" value="1"/>
</dbReference>
<dbReference type="InterPro" id="IPR030388">
    <property type="entry name" value="G_ERA_dom"/>
</dbReference>
<dbReference type="InterPro" id="IPR006073">
    <property type="entry name" value="GTP-bd"/>
</dbReference>
<dbReference type="InterPro" id="IPR005662">
    <property type="entry name" value="GTPase_Era-like"/>
</dbReference>
<dbReference type="InterPro" id="IPR015946">
    <property type="entry name" value="KH_dom-like_a/b"/>
</dbReference>
<dbReference type="InterPro" id="IPR004044">
    <property type="entry name" value="KH_dom_type_2"/>
</dbReference>
<dbReference type="InterPro" id="IPR009019">
    <property type="entry name" value="KH_sf_prok-type"/>
</dbReference>
<dbReference type="InterPro" id="IPR027417">
    <property type="entry name" value="P-loop_NTPase"/>
</dbReference>
<dbReference type="InterPro" id="IPR005225">
    <property type="entry name" value="Small_GTP-bd"/>
</dbReference>
<dbReference type="NCBIfam" id="TIGR00436">
    <property type="entry name" value="era"/>
    <property type="match status" value="1"/>
</dbReference>
<dbReference type="NCBIfam" id="NF000908">
    <property type="entry name" value="PRK00089.1"/>
    <property type="match status" value="1"/>
</dbReference>
<dbReference type="NCBIfam" id="TIGR00231">
    <property type="entry name" value="small_GTP"/>
    <property type="match status" value="1"/>
</dbReference>
<dbReference type="PANTHER" id="PTHR42698">
    <property type="entry name" value="GTPASE ERA"/>
    <property type="match status" value="1"/>
</dbReference>
<dbReference type="PANTHER" id="PTHR42698:SF1">
    <property type="entry name" value="GTPASE ERA, MITOCHONDRIAL"/>
    <property type="match status" value="1"/>
</dbReference>
<dbReference type="Pfam" id="PF07650">
    <property type="entry name" value="KH_2"/>
    <property type="match status" value="1"/>
</dbReference>
<dbReference type="Pfam" id="PF01926">
    <property type="entry name" value="MMR_HSR1"/>
    <property type="match status" value="1"/>
</dbReference>
<dbReference type="PRINTS" id="PR00326">
    <property type="entry name" value="GTP1OBG"/>
</dbReference>
<dbReference type="SUPFAM" id="SSF52540">
    <property type="entry name" value="P-loop containing nucleoside triphosphate hydrolases"/>
    <property type="match status" value="1"/>
</dbReference>
<dbReference type="SUPFAM" id="SSF54814">
    <property type="entry name" value="Prokaryotic type KH domain (KH-domain type II)"/>
    <property type="match status" value="1"/>
</dbReference>
<dbReference type="PROSITE" id="PS51713">
    <property type="entry name" value="G_ERA"/>
    <property type="match status" value="1"/>
</dbReference>
<dbReference type="PROSITE" id="PS50823">
    <property type="entry name" value="KH_TYPE_2"/>
    <property type="match status" value="1"/>
</dbReference>
<organism>
    <name type="scientific">Enterobacter sp. (strain 638)</name>
    <dbReference type="NCBI Taxonomy" id="399742"/>
    <lineage>
        <taxon>Bacteria</taxon>
        <taxon>Pseudomonadati</taxon>
        <taxon>Pseudomonadota</taxon>
        <taxon>Gammaproteobacteria</taxon>
        <taxon>Enterobacterales</taxon>
        <taxon>Enterobacteriaceae</taxon>
        <taxon>Enterobacter</taxon>
    </lineage>
</organism>
<protein>
    <recommendedName>
        <fullName evidence="1">GTPase Era</fullName>
    </recommendedName>
</protein>
<keyword id="KW-0997">Cell inner membrane</keyword>
<keyword id="KW-1003">Cell membrane</keyword>
<keyword id="KW-0963">Cytoplasm</keyword>
<keyword id="KW-0342">GTP-binding</keyword>
<keyword id="KW-0472">Membrane</keyword>
<keyword id="KW-0547">Nucleotide-binding</keyword>
<keyword id="KW-0690">Ribosome biogenesis</keyword>
<keyword id="KW-0694">RNA-binding</keyword>
<keyword id="KW-0699">rRNA-binding</keyword>
<proteinExistence type="inferred from homology"/>
<evidence type="ECO:0000255" key="1">
    <source>
        <dbReference type="HAMAP-Rule" id="MF_00367"/>
    </source>
</evidence>
<evidence type="ECO:0000255" key="2">
    <source>
        <dbReference type="PROSITE-ProRule" id="PRU01050"/>
    </source>
</evidence>
<comment type="function">
    <text evidence="1">An essential GTPase that binds both GDP and GTP, with rapid nucleotide exchange. Plays a role in 16S rRNA processing and 30S ribosomal subunit biogenesis and possibly also in cell cycle regulation and energy metabolism.</text>
</comment>
<comment type="subunit">
    <text evidence="1">Monomer.</text>
</comment>
<comment type="subcellular location">
    <subcellularLocation>
        <location>Cytoplasm</location>
    </subcellularLocation>
    <subcellularLocation>
        <location evidence="1">Cell inner membrane</location>
        <topology evidence="1">Peripheral membrane protein</topology>
    </subcellularLocation>
</comment>
<comment type="similarity">
    <text evidence="1 2">Belongs to the TRAFAC class TrmE-Era-EngA-EngB-Septin-like GTPase superfamily. Era GTPase family.</text>
</comment>
<accession>A4WDD7</accession>
<reference key="1">
    <citation type="journal article" date="2010" name="PLoS Genet.">
        <title>Genome sequence of the plant growth promoting endophytic bacterium Enterobacter sp. 638.</title>
        <authorList>
            <person name="Taghavi S."/>
            <person name="van der Lelie D."/>
            <person name="Hoffman A."/>
            <person name="Zhang Y.B."/>
            <person name="Walla M.D."/>
            <person name="Vangronsveld J."/>
            <person name="Newman L."/>
            <person name="Monchy S."/>
        </authorList>
    </citation>
    <scope>NUCLEOTIDE SEQUENCE [LARGE SCALE GENOMIC DNA]</scope>
    <source>
        <strain>638</strain>
    </source>
</reference>